<dbReference type="EMBL" id="J01220">
    <property type="protein sequence ID" value="AAA30286.1"/>
    <property type="molecule type" value="mRNA"/>
</dbReference>
<dbReference type="PIR" id="S09639">
    <property type="entry name" value="S09639"/>
</dbReference>
<dbReference type="SMR" id="P06013"/>
<dbReference type="GO" id="GO:0005886">
    <property type="term" value="C:plasma membrane"/>
    <property type="evidence" value="ECO:0007669"/>
    <property type="project" value="UniProtKB-SubCell"/>
</dbReference>
<dbReference type="GO" id="GO:0098552">
    <property type="term" value="C:side of membrane"/>
    <property type="evidence" value="ECO:0007669"/>
    <property type="project" value="UniProtKB-KW"/>
</dbReference>
<dbReference type="GO" id="GO:0042783">
    <property type="term" value="P:symbiont-mediated evasion of host immune response"/>
    <property type="evidence" value="ECO:0007669"/>
    <property type="project" value="InterPro"/>
</dbReference>
<dbReference type="Gene3D" id="3.30.1680.30">
    <property type="match status" value="1"/>
</dbReference>
<dbReference type="Gene3D" id="3.90.150.10">
    <property type="entry name" value="Variant Surface Glycoprotein, subunit A domain 1"/>
    <property type="match status" value="1"/>
</dbReference>
<dbReference type="InterPro" id="IPR001812">
    <property type="entry name" value="Trypano_VSG_A_N_dom"/>
</dbReference>
<dbReference type="InterPro" id="IPR019609">
    <property type="entry name" value="Variant_surf_glycoprt_trypan_C"/>
</dbReference>
<dbReference type="Pfam" id="PF00913">
    <property type="entry name" value="Trypan_glycop"/>
    <property type="match status" value="1"/>
</dbReference>
<dbReference type="Pfam" id="PF10659">
    <property type="entry name" value="Trypan_glycop_C"/>
    <property type="match status" value="1"/>
</dbReference>
<dbReference type="SUPFAM" id="SSF58087">
    <property type="entry name" value="Variant surface glycoprotein (N-terminal domain)"/>
    <property type="match status" value="1"/>
</dbReference>
<name>VSI0_TRYBB</name>
<keyword id="KW-1003">Cell membrane</keyword>
<keyword id="KW-0325">Glycoprotein</keyword>
<keyword id="KW-0336">GPI-anchor</keyword>
<keyword id="KW-0449">Lipoprotein</keyword>
<keyword id="KW-0472">Membrane</keyword>
<keyword id="KW-0821">Trypanosomiasis</keyword>
<evidence type="ECO:0000250" key="1"/>
<evidence type="ECO:0000255" key="2"/>
<evidence type="ECO:0000256" key="3">
    <source>
        <dbReference type="SAM" id="MobiDB-lite"/>
    </source>
</evidence>
<protein>
    <recommendedName>
        <fullName>Variant surface glycoprotein ILTAT 1.2</fullName>
        <shortName>VSG</shortName>
    </recommendedName>
</protein>
<accession>P06013</accession>
<comment type="function">
    <text>VSG forms a coat on the surface of the parasite. The trypanosome evades the immune response of the host by expressing a series of antigenically distinct VSGs from an estimated 1000 VSG genes.</text>
</comment>
<comment type="subcellular location">
    <subcellularLocation>
        <location>Cell membrane</location>
        <topology>Lipid-anchor</topology>
        <topology>GPI-anchor</topology>
    </subcellularLocation>
    <text evidence="1">A soluble form is released from ruptured cells by the action of a PI-PLC.</text>
</comment>
<organism>
    <name type="scientific">Trypanosoma brucei brucei</name>
    <dbReference type="NCBI Taxonomy" id="5702"/>
    <lineage>
        <taxon>Eukaryota</taxon>
        <taxon>Discoba</taxon>
        <taxon>Euglenozoa</taxon>
        <taxon>Kinetoplastea</taxon>
        <taxon>Metakinetoplastina</taxon>
        <taxon>Trypanosomatida</taxon>
        <taxon>Trypanosomatidae</taxon>
        <taxon>Trypanosoma</taxon>
    </lineage>
</organism>
<reference key="1">
    <citation type="journal article" date="1981" name="Nature">
        <title>Sequence homologies near the C-termini of the variable surface glycoproteins of Trypanosoma brucei.</title>
        <authorList>
            <person name="Rice-Ficht A.C."/>
            <person name="Chen K.K."/>
            <person name="Donelson J.E."/>
        </authorList>
    </citation>
    <scope>NUCLEOTIDE SEQUENCE [MRNA]</scope>
</reference>
<feature type="chain" id="PRO_0000221676" description="Variant surface glycoprotein ILTAT 1.2">
    <location>
        <begin position="1" status="less than"/>
        <end position="320" status="greater than"/>
    </location>
</feature>
<feature type="region of interest" description="Disordered" evidence="3">
    <location>
        <begin position="297"/>
        <end position="320"/>
    </location>
</feature>
<feature type="compositionally biased region" description="Low complexity" evidence="3">
    <location>
        <begin position="308"/>
        <end position="320"/>
    </location>
</feature>
<feature type="glycosylation site" description="N-linked (GlcNAc...) asparagine" evidence="2">
    <location>
        <position position="146"/>
    </location>
</feature>
<feature type="glycosylation site" description="N-linked (GlcNAc...) asparagine" evidence="2">
    <location>
        <position position="282"/>
    </location>
</feature>
<feature type="glycosylation site" description="N-linked (GlcNAc...) asparagine" evidence="2">
    <location>
        <position position="295"/>
    </location>
</feature>
<feature type="non-terminal residue">
    <location>
        <position position="1"/>
    </location>
</feature>
<feature type="non-terminal residue">
    <location>
        <position position="320"/>
    </location>
</feature>
<proteinExistence type="evidence at transcript level"/>
<sequence>ASGKGCLLGHDNSGYYQAKKLQGEDNTECDLEPHELKLSPLEIEVTDADGFTNGLAPGVADSHQTQGTKECGLLTAHGNNGLAKSGALDQNPKLLMGVFTVASSNSALTVADLTKAATSAIANTGLGQAHAAVKAIQDANPAANDNTSTSEDTAELQTAIMHLELQAATAGSRNMKEETKKIFTNKVQDTITKVLHNVYSHQITVPFVNNGKDTPLRSIPNTGELMEILAFYEQKVADNTAKTQKELTEAQQAMKTDRSGDGGCTQITEPTACNSKPFCSYNESTTDDDKKCKYNATKATENGVPVAQTQTGGSETTTEK</sequence>